<evidence type="ECO:0000255" key="1"/>
<evidence type="ECO:0000269" key="2">
    <source>
    </source>
</evidence>
<evidence type="ECO:0000303" key="3">
    <source>
    </source>
</evidence>
<evidence type="ECO:0000305" key="4"/>
<evidence type="ECO:0000305" key="5">
    <source>
    </source>
</evidence>
<gene>
    <name evidence="3" type="primary">RXLR38</name>
</gene>
<comment type="function">
    <text evidence="2">Secreted effector that completely suppresses the host cell death induced by cell death-inducing proteins.</text>
</comment>
<comment type="subcellular location">
    <subcellularLocation>
        <location evidence="2">Secreted</location>
    </subcellularLocation>
    <subcellularLocation>
        <location evidence="2">Host nucleus</location>
    </subcellularLocation>
    <subcellularLocation>
        <location evidence="2">Host cytoplasm</location>
    </subcellularLocation>
</comment>
<comment type="domain">
    <text evidence="5">The RxLR-dEER motif acts to carry the protein into the host cell cytoplasm through binding to cell surface phosphatidylinositol-3-phosphate.</text>
</comment>
<comment type="similarity">
    <text evidence="4">Belongs to the RxLR effector family.</text>
</comment>
<protein>
    <recommendedName>
        <fullName evidence="3">Secreted RxLR effector protein 38</fullName>
    </recommendedName>
</protein>
<name>RLR38_PLAVT</name>
<dbReference type="SMR" id="P0CV07"/>
<dbReference type="GO" id="GO:0005576">
    <property type="term" value="C:extracellular region"/>
    <property type="evidence" value="ECO:0007669"/>
    <property type="project" value="UniProtKB-SubCell"/>
</dbReference>
<dbReference type="GO" id="GO:0030430">
    <property type="term" value="C:host cell cytoplasm"/>
    <property type="evidence" value="ECO:0007669"/>
    <property type="project" value="UniProtKB-SubCell"/>
</dbReference>
<dbReference type="GO" id="GO:0042025">
    <property type="term" value="C:host cell nucleus"/>
    <property type="evidence" value="ECO:0007669"/>
    <property type="project" value="UniProtKB-SubCell"/>
</dbReference>
<dbReference type="InterPro" id="IPR031825">
    <property type="entry name" value="RXLR"/>
</dbReference>
<dbReference type="Pfam" id="PF16810">
    <property type="entry name" value="RXLR"/>
    <property type="match status" value="1"/>
</dbReference>
<feature type="signal peptide" evidence="1">
    <location>
        <begin position="1"/>
        <end position="17"/>
    </location>
</feature>
<feature type="chain" id="PRO_0000447916" description="Secreted RxLR effector protein 38">
    <location>
        <begin position="18"/>
        <end position="155"/>
    </location>
</feature>
<feature type="short sequence motif" description="RxLR-dEER" evidence="5">
    <location>
        <begin position="49"/>
        <end position="64"/>
    </location>
</feature>
<organism>
    <name type="scientific">Plasmopara viticola</name>
    <name type="common">Downy mildew of grapevine</name>
    <name type="synonym">Botrytis viticola</name>
    <dbReference type="NCBI Taxonomy" id="143451"/>
    <lineage>
        <taxon>Eukaryota</taxon>
        <taxon>Sar</taxon>
        <taxon>Stramenopiles</taxon>
        <taxon>Oomycota</taxon>
        <taxon>Peronosporales</taxon>
        <taxon>Peronosporaceae</taxon>
        <taxon>Plasmopara</taxon>
    </lineage>
</organism>
<accession>P0CV07</accession>
<sequence>MHLIYIVMAATATTLHASSSAILDPSDVKIMTKNVESRIGNDAAFAAGRFLRGAYEDVHREEERMFGLKQNQHSFIKPSQAQDAAAIDALNIAKEALESTRNTKDHPHATATAGDQSLNPLIAAYPLRASPNAGVPQQHLGVALGSVHPHTSRST</sequence>
<keyword id="KW-1035">Host cytoplasm</keyword>
<keyword id="KW-1048">Host nucleus</keyword>
<keyword id="KW-0964">Secreted</keyword>
<keyword id="KW-0732">Signal</keyword>
<keyword id="KW-0843">Virulence</keyword>
<reference key="1">
    <citation type="journal article" date="2018" name="Front. Plant Sci.">
        <title>In planta functional analysis and subcellular localization of the oomycete pathogen Plasmopara viticola candidate RXLR effector repertoire.</title>
        <authorList>
            <person name="Liu Y."/>
            <person name="Lan X."/>
            <person name="Song S."/>
            <person name="Yin L."/>
            <person name="Dry I.B."/>
            <person name="Qu J."/>
            <person name="Xiang J."/>
            <person name="Lu J."/>
        </authorList>
    </citation>
    <scope>NUCLEOTIDE SEQUENCE [MRNA]</scope>
    <scope>DOMAIN</scope>
    <scope>FUNCTION</scope>
    <scope>SUBCELLULAR LOCATION</scope>
</reference>
<proteinExistence type="evidence at transcript level"/>